<sequence length="58" mass="6505">MRCLPVFIILPLLIPSAPSVDAQPMTEDDVPLASFHEQTLQELWNKRPCCPLIPGCCR</sequence>
<organism>
    <name type="scientific">Conus leopardus</name>
    <name type="common">Leopard cone</name>
    <dbReference type="NCBI Taxonomy" id="101306"/>
    <lineage>
        <taxon>Eukaryota</taxon>
        <taxon>Metazoa</taxon>
        <taxon>Spiralia</taxon>
        <taxon>Lophotrochozoa</taxon>
        <taxon>Mollusca</taxon>
        <taxon>Gastropoda</taxon>
        <taxon>Caenogastropoda</taxon>
        <taxon>Neogastropoda</taxon>
        <taxon>Conoidea</taxon>
        <taxon>Conidae</taxon>
        <taxon>Conus</taxon>
        <taxon>Lithoconus</taxon>
    </lineage>
</organism>
<proteinExistence type="inferred from homology"/>
<reference key="1">
    <citation type="journal article" date="2008" name="Mol. Ecol.">
        <title>Evolution of ecological specialization and venom of a predatory marine gastropod.</title>
        <authorList>
            <person name="Remigio E.A."/>
            <person name="Duda T.F. Jr."/>
        </authorList>
    </citation>
    <scope>NUCLEOTIDE SEQUENCE [GENOMIC DNA]</scope>
</reference>
<evidence type="ECO:0000255" key="1"/>
<evidence type="ECO:0000303" key="2">
    <source>
    </source>
</evidence>
<evidence type="ECO:0000305" key="3"/>
<evidence type="ECO:0000305" key="4">
    <source>
    </source>
</evidence>
<comment type="subcellular location">
    <subcellularLocation>
        <location evidence="4">Secreted</location>
    </subcellularLocation>
</comment>
<comment type="tissue specificity">
    <text evidence="4">Expressed by the venom duct.</text>
</comment>
<comment type="domain">
    <text evidence="3">The cysteine framework is V (CC-CC).</text>
</comment>
<comment type="PTM">
    <text evidence="3">Contains 2 disulfide bonds that can be either 'C1-C3, C2-C4' or 'C1-C4, C2-C3', since these disulfide connectivities have been observed for conotoxins with cysteine framework V (for examples, see AC P0DQQ7 and AC P81755).</text>
</comment>
<comment type="similarity">
    <text evidence="3">Belongs to the conotoxin T superfamily.</text>
</comment>
<protein>
    <recommendedName>
        <fullName evidence="2">Conotoxin Leo-T2</fullName>
    </recommendedName>
</protein>
<keyword id="KW-0165">Cleavage on pair of basic residues</keyword>
<keyword id="KW-1015">Disulfide bond</keyword>
<keyword id="KW-0964">Secreted</keyword>
<keyword id="KW-0732">Signal</keyword>
<keyword id="KW-0800">Toxin</keyword>
<dbReference type="EMBL" id="EF467315">
    <property type="status" value="NOT_ANNOTATED_CDS"/>
    <property type="molecule type" value="Genomic_DNA"/>
</dbReference>
<dbReference type="ConoServer" id="3015">
    <property type="toxin name" value="Lp5.4 precursor"/>
</dbReference>
<dbReference type="GO" id="GO:0005576">
    <property type="term" value="C:extracellular region"/>
    <property type="evidence" value="ECO:0007669"/>
    <property type="project" value="UniProtKB-SubCell"/>
</dbReference>
<dbReference type="GO" id="GO:0090729">
    <property type="term" value="F:toxin activity"/>
    <property type="evidence" value="ECO:0007669"/>
    <property type="project" value="UniProtKB-KW"/>
</dbReference>
<dbReference type="InterPro" id="IPR031565">
    <property type="entry name" value="T-conotoxin"/>
</dbReference>
<dbReference type="Pfam" id="PF16981">
    <property type="entry name" value="Chi-conotoxin"/>
    <property type="match status" value="1"/>
</dbReference>
<feature type="signal peptide" evidence="1">
    <location>
        <begin position="1"/>
        <end position="22"/>
    </location>
</feature>
<feature type="propeptide" id="PRO_0000368014" evidence="4">
    <location>
        <begin position="23"/>
        <end position="47"/>
    </location>
</feature>
<feature type="peptide" id="PRO_0000368015" description="Conotoxin Leo-T2" evidence="4">
    <location>
        <begin position="48"/>
        <end position="57"/>
    </location>
</feature>
<name>CT12_CONLE</name>
<accession>P0C907</accession>